<protein>
    <recommendedName>
        <fullName evidence="1">Ubiquinone biosynthesis protein coq4, mitochondrial</fullName>
    </recommendedName>
    <alternativeName>
        <fullName>4-hydroxy-3-methoxy-5-polyprenylbenzoate decarboxylase</fullName>
        <ecNumber evidence="1">4.1.1.130</ecNumber>
    </alternativeName>
    <alternativeName>
        <fullName evidence="1">Coenzyme Q biosynthesis protein 4</fullName>
    </alternativeName>
</protein>
<name>COQ4_PYRTR</name>
<dbReference type="EC" id="4.1.1.130" evidence="1"/>
<dbReference type="EMBL" id="DS231621">
    <property type="protein sequence ID" value="EDU49882.1"/>
    <property type="molecule type" value="Genomic_DNA"/>
</dbReference>
<dbReference type="RefSeq" id="XP_001937295.1">
    <property type="nucleotide sequence ID" value="XM_001937260.1"/>
</dbReference>
<dbReference type="SMR" id="B2WBF0"/>
<dbReference type="FunCoup" id="B2WBF0">
    <property type="interactions" value="517"/>
</dbReference>
<dbReference type="STRING" id="426418.B2WBF0"/>
<dbReference type="EnsemblFungi" id="EDU49882">
    <property type="protein sequence ID" value="EDU49882"/>
    <property type="gene ID" value="PTRG_06963"/>
</dbReference>
<dbReference type="GeneID" id="6345234"/>
<dbReference type="KEGG" id="ptrr:6345234"/>
<dbReference type="eggNOG" id="KOG3244">
    <property type="taxonomic scope" value="Eukaryota"/>
</dbReference>
<dbReference type="HOGENOM" id="CLU_061241_0_0_1"/>
<dbReference type="InParanoid" id="B2WBF0"/>
<dbReference type="OMA" id="YYERHFH"/>
<dbReference type="OrthoDB" id="13832at28556"/>
<dbReference type="UniPathway" id="UPA00232"/>
<dbReference type="Proteomes" id="UP000001471">
    <property type="component" value="Unassembled WGS sequence"/>
</dbReference>
<dbReference type="GO" id="GO:0031314">
    <property type="term" value="C:extrinsic component of mitochondrial inner membrane"/>
    <property type="evidence" value="ECO:0007669"/>
    <property type="project" value="UniProtKB-UniRule"/>
</dbReference>
<dbReference type="GO" id="GO:0006744">
    <property type="term" value="P:ubiquinone biosynthetic process"/>
    <property type="evidence" value="ECO:0007669"/>
    <property type="project" value="UniProtKB-UniRule"/>
</dbReference>
<dbReference type="HAMAP" id="MF_03111">
    <property type="entry name" value="Coq4"/>
    <property type="match status" value="1"/>
</dbReference>
<dbReference type="InterPro" id="IPR007715">
    <property type="entry name" value="Coq4"/>
</dbReference>
<dbReference type="InterPro" id="IPR027540">
    <property type="entry name" value="Coq4_euk"/>
</dbReference>
<dbReference type="PANTHER" id="PTHR12922">
    <property type="entry name" value="UBIQUINONE BIOSYNTHESIS PROTEIN"/>
    <property type="match status" value="1"/>
</dbReference>
<dbReference type="PANTHER" id="PTHR12922:SF7">
    <property type="entry name" value="UBIQUINONE BIOSYNTHESIS PROTEIN COQ4 HOMOLOG, MITOCHONDRIAL"/>
    <property type="match status" value="1"/>
</dbReference>
<dbReference type="Pfam" id="PF05019">
    <property type="entry name" value="Coq4"/>
    <property type="match status" value="1"/>
</dbReference>
<keyword id="KW-0456">Lyase</keyword>
<keyword id="KW-0472">Membrane</keyword>
<keyword id="KW-0479">Metal-binding</keyword>
<keyword id="KW-0496">Mitochondrion</keyword>
<keyword id="KW-0999">Mitochondrion inner membrane</keyword>
<keyword id="KW-1185">Reference proteome</keyword>
<keyword id="KW-0809">Transit peptide</keyword>
<keyword id="KW-0831">Ubiquinone biosynthesis</keyword>
<keyword id="KW-0862">Zinc</keyword>
<evidence type="ECO:0000255" key="1">
    <source>
        <dbReference type="HAMAP-Rule" id="MF_03111"/>
    </source>
</evidence>
<evidence type="ECO:0000256" key="2">
    <source>
        <dbReference type="SAM" id="MobiDB-lite"/>
    </source>
</evidence>
<comment type="function">
    <text evidence="1">Lyase that catalyzes the C1-decarboxylation of 4-hydroxy-3-methoxy-5-(all-trans-polyprenyl)benzoic acid into 2-methoxy-6-(all-trans-polyprenyl)phenol during ubiquinone biosynthesis.</text>
</comment>
<comment type="catalytic activity">
    <reaction evidence="1">
        <text>a 4-hydroxy-3-methoxy-5-(all-trans-polyprenyl)benzoate + H(+) = a 2-methoxy-6-(all-trans-polyprenyl)phenol + CO2</text>
        <dbReference type="Rhea" id="RHEA:81179"/>
        <dbReference type="Rhea" id="RHEA-COMP:9551"/>
        <dbReference type="Rhea" id="RHEA-COMP:10931"/>
        <dbReference type="ChEBI" id="CHEBI:15378"/>
        <dbReference type="ChEBI" id="CHEBI:16526"/>
        <dbReference type="ChEBI" id="CHEBI:62731"/>
        <dbReference type="ChEBI" id="CHEBI:84443"/>
        <dbReference type="EC" id="4.1.1.130"/>
    </reaction>
</comment>
<comment type="cofactor">
    <cofactor evidence="1">
        <name>Zn(2+)</name>
        <dbReference type="ChEBI" id="CHEBI:29105"/>
    </cofactor>
</comment>
<comment type="pathway">
    <text evidence="1">Cofactor biosynthesis; ubiquinone biosynthesis.</text>
</comment>
<comment type="subunit">
    <text evidence="1">Component of a multi-subunit COQ enzyme complex, composed of at least coq3, coq4, coq5, coq6, coq7 and coq9.</text>
</comment>
<comment type="subcellular location">
    <subcellularLocation>
        <location evidence="1">Mitochondrion inner membrane</location>
        <topology evidence="1">Peripheral membrane protein</topology>
        <orientation evidence="1">Matrix side</orientation>
    </subcellularLocation>
</comment>
<comment type="similarity">
    <text evidence="1">Belongs to the COQ4 family.</text>
</comment>
<reference key="1">
    <citation type="journal article" date="2013" name="G3 (Bethesda)">
        <title>Comparative genomics of a plant-pathogenic fungus, Pyrenophora tritici-repentis, reveals transduplication and the impact of repeat elements on pathogenicity and population divergence.</title>
        <authorList>
            <person name="Manning V.A."/>
            <person name="Pandelova I."/>
            <person name="Dhillon B."/>
            <person name="Wilhelm L.J."/>
            <person name="Goodwin S.B."/>
            <person name="Berlin A.M."/>
            <person name="Figueroa M."/>
            <person name="Freitag M."/>
            <person name="Hane J.K."/>
            <person name="Henrissat B."/>
            <person name="Holman W.H."/>
            <person name="Kodira C.D."/>
            <person name="Martin J."/>
            <person name="Oliver R.P."/>
            <person name="Robbertse B."/>
            <person name="Schackwitz W."/>
            <person name="Schwartz D.C."/>
            <person name="Spatafora J.W."/>
            <person name="Turgeon B.G."/>
            <person name="Yandava C."/>
            <person name="Young S."/>
            <person name="Zhou S."/>
            <person name="Zeng Q."/>
            <person name="Grigoriev I.V."/>
            <person name="Ma L.-J."/>
            <person name="Ciuffetti L.M."/>
        </authorList>
    </citation>
    <scope>NUCLEOTIDE SEQUENCE [LARGE SCALE GENOMIC DNA]</scope>
    <source>
        <strain>Pt-1C-BFP</strain>
    </source>
</reference>
<organism>
    <name type="scientific">Pyrenophora tritici-repentis (strain Pt-1C-BFP)</name>
    <name type="common">Wheat tan spot fungus</name>
    <name type="synonym">Drechslera tritici-repentis</name>
    <dbReference type="NCBI Taxonomy" id="426418"/>
    <lineage>
        <taxon>Eukaryota</taxon>
        <taxon>Fungi</taxon>
        <taxon>Dikarya</taxon>
        <taxon>Ascomycota</taxon>
        <taxon>Pezizomycotina</taxon>
        <taxon>Dothideomycetes</taxon>
        <taxon>Pleosporomycetidae</taxon>
        <taxon>Pleosporales</taxon>
        <taxon>Pleosporineae</taxon>
        <taxon>Pleosporaceae</taxon>
        <taxon>Pyrenophora</taxon>
    </lineage>
</organism>
<proteinExistence type="inferred from homology"/>
<sequence>MAKHVRMHQLQKLTLRSLPPASVLVSSSRCFSVLNRPPPNYEGHIPLTRTERLGLALGSGIGSFLDPQRGDLIASFGEATAQPYFIYKLRDRMLLNPTGRRILRDRPRLTSTSLDIPRLRNLPPNTVGYAYAAWLDREGVSPDTRAAVQYIDDEECAYVMQRYRECHDFYHALVGLPVFREGEVALKAFEFANTGLPMTGLAVFSAFTLKKAEWRRFWDIYGPWATRNGAQSDDVINVYWEEELETDIDKLRERLGIEKPPDLRAMRKAEREARKKEKETKGTMVGAAT</sequence>
<accession>B2WBF0</accession>
<feature type="transit peptide" description="Mitochondrion" evidence="1">
    <location>
        <begin position="1"/>
        <end position="31"/>
    </location>
</feature>
<feature type="chain" id="PRO_0000388133" description="Ubiquinone biosynthesis protein coq4, mitochondrial">
    <location>
        <begin position="32"/>
        <end position="289"/>
    </location>
</feature>
<feature type="region of interest" description="Disordered" evidence="2">
    <location>
        <begin position="266"/>
        <end position="289"/>
    </location>
</feature>
<feature type="compositionally biased region" description="Basic and acidic residues" evidence="2">
    <location>
        <begin position="266"/>
        <end position="281"/>
    </location>
</feature>
<feature type="binding site" evidence="1">
    <location>
        <position position="167"/>
    </location>
    <ligand>
        <name>Zn(2+)</name>
        <dbReference type="ChEBI" id="CHEBI:29105"/>
    </ligand>
</feature>
<feature type="binding site" evidence="1">
    <location>
        <position position="168"/>
    </location>
    <ligand>
        <name>Zn(2+)</name>
        <dbReference type="ChEBI" id="CHEBI:29105"/>
    </ligand>
</feature>
<feature type="binding site" evidence="1">
    <location>
        <position position="171"/>
    </location>
    <ligand>
        <name>Zn(2+)</name>
        <dbReference type="ChEBI" id="CHEBI:29105"/>
    </ligand>
</feature>
<feature type="binding site" evidence="1">
    <location>
        <position position="183"/>
    </location>
    <ligand>
        <name>Zn(2+)</name>
        <dbReference type="ChEBI" id="CHEBI:29105"/>
    </ligand>
</feature>
<gene>
    <name type="primary">coq4</name>
    <name type="ORF">PTRG_06963</name>
</gene>